<proteinExistence type="inferred from homology"/>
<organism>
    <name type="scientific">Lachancea thermotolerans (strain ATCC 56472 / CBS 6340 / NRRL Y-8284)</name>
    <name type="common">Yeast</name>
    <name type="synonym">Kluyveromyces thermotolerans</name>
    <dbReference type="NCBI Taxonomy" id="559295"/>
    <lineage>
        <taxon>Eukaryota</taxon>
        <taxon>Fungi</taxon>
        <taxon>Dikarya</taxon>
        <taxon>Ascomycota</taxon>
        <taxon>Saccharomycotina</taxon>
        <taxon>Saccharomycetes</taxon>
        <taxon>Saccharomycetales</taxon>
        <taxon>Saccharomycetaceae</taxon>
        <taxon>Lachancea</taxon>
    </lineage>
</organism>
<dbReference type="EC" id="2.8.1.8" evidence="1"/>
<dbReference type="EMBL" id="CU928168">
    <property type="protein sequence ID" value="CAR22687.1"/>
    <property type="molecule type" value="Genomic_DNA"/>
</dbReference>
<dbReference type="RefSeq" id="XP_002553125.1">
    <property type="nucleotide sequence ID" value="XM_002553079.1"/>
</dbReference>
<dbReference type="SMR" id="C5DGZ5"/>
<dbReference type="FunCoup" id="C5DGZ5">
    <property type="interactions" value="612"/>
</dbReference>
<dbReference type="STRING" id="559295.C5DGZ5"/>
<dbReference type="GeneID" id="8295363"/>
<dbReference type="KEGG" id="lth:KLTH0D09548g"/>
<dbReference type="eggNOG" id="KOG2672">
    <property type="taxonomic scope" value="Eukaryota"/>
</dbReference>
<dbReference type="HOGENOM" id="CLU_033144_2_0_1"/>
<dbReference type="InParanoid" id="C5DGZ5"/>
<dbReference type="OMA" id="PYCDIDF"/>
<dbReference type="OrthoDB" id="3231at2759"/>
<dbReference type="UniPathway" id="UPA00538">
    <property type="reaction ID" value="UER00593"/>
</dbReference>
<dbReference type="Proteomes" id="UP000002036">
    <property type="component" value="Chromosome D"/>
</dbReference>
<dbReference type="GO" id="GO:0005739">
    <property type="term" value="C:mitochondrion"/>
    <property type="evidence" value="ECO:0007669"/>
    <property type="project" value="UniProtKB-SubCell"/>
</dbReference>
<dbReference type="GO" id="GO:0051539">
    <property type="term" value="F:4 iron, 4 sulfur cluster binding"/>
    <property type="evidence" value="ECO:0007669"/>
    <property type="project" value="UniProtKB-UniRule"/>
</dbReference>
<dbReference type="GO" id="GO:0016992">
    <property type="term" value="F:lipoate synthase activity"/>
    <property type="evidence" value="ECO:0007669"/>
    <property type="project" value="UniProtKB-UniRule"/>
</dbReference>
<dbReference type="GO" id="GO:0046872">
    <property type="term" value="F:metal ion binding"/>
    <property type="evidence" value="ECO:0007669"/>
    <property type="project" value="UniProtKB-KW"/>
</dbReference>
<dbReference type="CDD" id="cd01335">
    <property type="entry name" value="Radical_SAM"/>
    <property type="match status" value="1"/>
</dbReference>
<dbReference type="FunFam" id="3.20.20.70:FF:000036">
    <property type="entry name" value="Lipoyl synthase, mitochondrial"/>
    <property type="match status" value="1"/>
</dbReference>
<dbReference type="Gene3D" id="3.20.20.70">
    <property type="entry name" value="Aldolase class I"/>
    <property type="match status" value="1"/>
</dbReference>
<dbReference type="HAMAP" id="MF_00206">
    <property type="entry name" value="Lipoyl_synth"/>
    <property type="match status" value="1"/>
</dbReference>
<dbReference type="InterPro" id="IPR013785">
    <property type="entry name" value="Aldolase_TIM"/>
</dbReference>
<dbReference type="InterPro" id="IPR006638">
    <property type="entry name" value="Elp3/MiaA/NifB-like_rSAM"/>
</dbReference>
<dbReference type="InterPro" id="IPR031691">
    <property type="entry name" value="LIAS_N"/>
</dbReference>
<dbReference type="InterPro" id="IPR003698">
    <property type="entry name" value="Lipoyl_synth"/>
</dbReference>
<dbReference type="InterPro" id="IPR007197">
    <property type="entry name" value="rSAM"/>
</dbReference>
<dbReference type="NCBIfam" id="TIGR00510">
    <property type="entry name" value="lipA"/>
    <property type="match status" value="1"/>
</dbReference>
<dbReference type="NCBIfam" id="NF004019">
    <property type="entry name" value="PRK05481.1"/>
    <property type="match status" value="1"/>
</dbReference>
<dbReference type="NCBIfam" id="NF009544">
    <property type="entry name" value="PRK12928.1"/>
    <property type="match status" value="1"/>
</dbReference>
<dbReference type="PANTHER" id="PTHR10949">
    <property type="entry name" value="LIPOYL SYNTHASE"/>
    <property type="match status" value="1"/>
</dbReference>
<dbReference type="PANTHER" id="PTHR10949:SF0">
    <property type="entry name" value="LIPOYL SYNTHASE, MITOCHONDRIAL"/>
    <property type="match status" value="1"/>
</dbReference>
<dbReference type="Pfam" id="PF16881">
    <property type="entry name" value="LIAS_N"/>
    <property type="match status" value="1"/>
</dbReference>
<dbReference type="Pfam" id="PF04055">
    <property type="entry name" value="Radical_SAM"/>
    <property type="match status" value="1"/>
</dbReference>
<dbReference type="PIRSF" id="PIRSF005963">
    <property type="entry name" value="Lipoyl_synth"/>
    <property type="match status" value="1"/>
</dbReference>
<dbReference type="SFLD" id="SFLDF00271">
    <property type="entry name" value="lipoyl_synthase"/>
    <property type="match status" value="1"/>
</dbReference>
<dbReference type="SFLD" id="SFLDG01058">
    <property type="entry name" value="lipoyl_synthase_like"/>
    <property type="match status" value="1"/>
</dbReference>
<dbReference type="SMART" id="SM00729">
    <property type="entry name" value="Elp3"/>
    <property type="match status" value="1"/>
</dbReference>
<dbReference type="SUPFAM" id="SSF102114">
    <property type="entry name" value="Radical SAM enzymes"/>
    <property type="match status" value="1"/>
</dbReference>
<dbReference type="PROSITE" id="PS51918">
    <property type="entry name" value="RADICAL_SAM"/>
    <property type="match status" value="1"/>
</dbReference>
<name>LIPA_LACTC</name>
<protein>
    <recommendedName>
        <fullName evidence="1">Lipoyl synthase, mitochondrial</fullName>
        <ecNumber evidence="1">2.8.1.8</ecNumber>
    </recommendedName>
    <alternativeName>
        <fullName evidence="1">Lipoate synthase</fullName>
        <shortName evidence="1">LS</shortName>
        <shortName evidence="1">Lip-syn</shortName>
    </alternativeName>
    <alternativeName>
        <fullName evidence="1">Lipoic acid synthase</fullName>
    </alternativeName>
</protein>
<keyword id="KW-0004">4Fe-4S</keyword>
<keyword id="KW-0408">Iron</keyword>
<keyword id="KW-0411">Iron-sulfur</keyword>
<keyword id="KW-0479">Metal-binding</keyword>
<keyword id="KW-0496">Mitochondrion</keyword>
<keyword id="KW-1185">Reference proteome</keyword>
<keyword id="KW-0949">S-adenosyl-L-methionine</keyword>
<keyword id="KW-0808">Transferase</keyword>
<keyword id="KW-0809">Transit peptide</keyword>
<accession>C5DGZ5</accession>
<sequence length="371" mass="41451">MLSRFKCSRLQLQKRAISVTKATTTTASQPKRRRTTTFSDALNKGPSFEDFVSGKAAKFTLDPLQQARSNIEEAKRLPRWLKVPIPKGTNYHKLKKDVRELKLSTVCEEAKCPNISECWGGGDSSKATATIMLLGDTCTRGCRFCSVKTNRAPSKPDPAEPENTAEAISRWGLGYVVLTTVDRDDLADGGAHHLAETVCRIKQKAPKTLVETLSGDFRGDLEMVKVMAQSGLDVYAHNLETVKDLTPHVRDRRATYEQSLSVLNQAKKTVPTLITKTSLMLGLGETDEQVLQTLQDLRAIGCDVVTFGQYMRPTKRHMKVVEYVKPEKFDYWRDKALELGFLYCASGPLVRSSYKAGEAFIENVLRKRANN</sequence>
<gene>
    <name type="ordered locus">KLTH0D09548g</name>
</gene>
<comment type="function">
    <text evidence="1">Catalyzes the radical-mediated insertion of two sulfur atoms into the C-6 and C-8 positions of the octanoyl moiety bound to the lipoyl domains of lipoate-dependent enzymes, thereby converting the octanoylated domains into lipoylated derivatives.</text>
</comment>
<comment type="catalytic activity">
    <reaction evidence="1">
        <text>[[Fe-S] cluster scaffold protein carrying a second [4Fe-4S](2+) cluster] + N(6)-octanoyl-L-lysyl-[protein] + 2 oxidized [2Fe-2S]-[ferredoxin] + 2 S-adenosyl-L-methionine + 4 H(+) = [[Fe-S] cluster scaffold protein] + N(6)-[(R)-dihydrolipoyl]-L-lysyl-[protein] + 4 Fe(3+) + 2 hydrogen sulfide + 2 5'-deoxyadenosine + 2 L-methionine + 2 reduced [2Fe-2S]-[ferredoxin]</text>
        <dbReference type="Rhea" id="RHEA:16585"/>
        <dbReference type="Rhea" id="RHEA-COMP:9928"/>
        <dbReference type="Rhea" id="RHEA-COMP:10000"/>
        <dbReference type="Rhea" id="RHEA-COMP:10001"/>
        <dbReference type="Rhea" id="RHEA-COMP:10475"/>
        <dbReference type="Rhea" id="RHEA-COMP:14568"/>
        <dbReference type="Rhea" id="RHEA-COMP:14569"/>
        <dbReference type="ChEBI" id="CHEBI:15378"/>
        <dbReference type="ChEBI" id="CHEBI:17319"/>
        <dbReference type="ChEBI" id="CHEBI:29034"/>
        <dbReference type="ChEBI" id="CHEBI:29919"/>
        <dbReference type="ChEBI" id="CHEBI:33722"/>
        <dbReference type="ChEBI" id="CHEBI:33737"/>
        <dbReference type="ChEBI" id="CHEBI:33738"/>
        <dbReference type="ChEBI" id="CHEBI:57844"/>
        <dbReference type="ChEBI" id="CHEBI:59789"/>
        <dbReference type="ChEBI" id="CHEBI:78809"/>
        <dbReference type="ChEBI" id="CHEBI:83100"/>
        <dbReference type="EC" id="2.8.1.8"/>
    </reaction>
</comment>
<comment type="cofactor">
    <cofactor evidence="1">
        <name>[4Fe-4S] cluster</name>
        <dbReference type="ChEBI" id="CHEBI:49883"/>
    </cofactor>
    <text evidence="1">Binds 2 [4Fe-4S] clusters per subunit. One cluster is coordinated with 3 cysteines and an exchangeable S-adenosyl-L-methionine.</text>
</comment>
<comment type="pathway">
    <text evidence="1">Protein modification; protein lipoylation via endogenous pathway; protein N(6)-(lipoyl)lysine from octanoyl-[acyl-carrier-protein]: step 2/2.</text>
</comment>
<comment type="subcellular location">
    <subcellularLocation>
        <location evidence="1">Mitochondrion</location>
    </subcellularLocation>
</comment>
<comment type="similarity">
    <text evidence="1">Belongs to the radical SAM superfamily. Lipoyl synthase family.</text>
</comment>
<feature type="transit peptide" description="Mitochondrion" evidence="1">
    <location>
        <begin position="1"/>
        <end position="24"/>
    </location>
</feature>
<feature type="chain" id="PRO_0000398270" description="Lipoyl synthase, mitochondrial">
    <location>
        <begin position="25"/>
        <end position="371"/>
    </location>
</feature>
<feature type="domain" description="Radical SAM core" evidence="2">
    <location>
        <begin position="121"/>
        <end position="342"/>
    </location>
</feature>
<feature type="region of interest" description="Disordered" evidence="3">
    <location>
        <begin position="20"/>
        <end position="42"/>
    </location>
</feature>
<feature type="compositionally biased region" description="Polar residues" evidence="3">
    <location>
        <begin position="20"/>
        <end position="29"/>
    </location>
</feature>
<feature type="binding site" evidence="1">
    <location>
        <position position="107"/>
    </location>
    <ligand>
        <name>[4Fe-4S] cluster</name>
        <dbReference type="ChEBI" id="CHEBI:49883"/>
        <label>1</label>
    </ligand>
</feature>
<feature type="binding site" evidence="1">
    <location>
        <position position="112"/>
    </location>
    <ligand>
        <name>[4Fe-4S] cluster</name>
        <dbReference type="ChEBI" id="CHEBI:49883"/>
        <label>1</label>
    </ligand>
</feature>
<feature type="binding site" evidence="1">
    <location>
        <position position="118"/>
    </location>
    <ligand>
        <name>[4Fe-4S] cluster</name>
        <dbReference type="ChEBI" id="CHEBI:49883"/>
        <label>1</label>
    </ligand>
</feature>
<feature type="binding site" evidence="1">
    <location>
        <position position="138"/>
    </location>
    <ligand>
        <name>[4Fe-4S] cluster</name>
        <dbReference type="ChEBI" id="CHEBI:49883"/>
        <label>2</label>
        <note>4Fe-4S-S-AdoMet</note>
    </ligand>
</feature>
<feature type="binding site" evidence="1">
    <location>
        <position position="142"/>
    </location>
    <ligand>
        <name>[4Fe-4S] cluster</name>
        <dbReference type="ChEBI" id="CHEBI:49883"/>
        <label>2</label>
        <note>4Fe-4S-S-AdoMet</note>
    </ligand>
</feature>
<feature type="binding site" evidence="1">
    <location>
        <position position="145"/>
    </location>
    <ligand>
        <name>[4Fe-4S] cluster</name>
        <dbReference type="ChEBI" id="CHEBI:49883"/>
        <label>2</label>
        <note>4Fe-4S-S-AdoMet</note>
    </ligand>
</feature>
<feature type="binding site" evidence="1">
    <location>
        <position position="353"/>
    </location>
    <ligand>
        <name>[4Fe-4S] cluster</name>
        <dbReference type="ChEBI" id="CHEBI:49883"/>
        <label>1</label>
    </ligand>
</feature>
<reference key="1">
    <citation type="journal article" date="2009" name="Genome Res.">
        <title>Comparative genomics of protoploid Saccharomycetaceae.</title>
        <authorList>
            <consortium name="The Genolevures Consortium"/>
            <person name="Souciet J.-L."/>
            <person name="Dujon B."/>
            <person name="Gaillardin C."/>
            <person name="Johnston M."/>
            <person name="Baret P.V."/>
            <person name="Cliften P."/>
            <person name="Sherman D.J."/>
            <person name="Weissenbach J."/>
            <person name="Westhof E."/>
            <person name="Wincker P."/>
            <person name="Jubin C."/>
            <person name="Poulain J."/>
            <person name="Barbe V."/>
            <person name="Segurens B."/>
            <person name="Artiguenave F."/>
            <person name="Anthouard V."/>
            <person name="Vacherie B."/>
            <person name="Val M.-E."/>
            <person name="Fulton R.S."/>
            <person name="Minx P."/>
            <person name="Wilson R."/>
            <person name="Durrens P."/>
            <person name="Jean G."/>
            <person name="Marck C."/>
            <person name="Martin T."/>
            <person name="Nikolski M."/>
            <person name="Rolland T."/>
            <person name="Seret M.-L."/>
            <person name="Casaregola S."/>
            <person name="Despons L."/>
            <person name="Fairhead C."/>
            <person name="Fischer G."/>
            <person name="Lafontaine I."/>
            <person name="Leh V."/>
            <person name="Lemaire M."/>
            <person name="de Montigny J."/>
            <person name="Neuveglise C."/>
            <person name="Thierry A."/>
            <person name="Blanc-Lenfle I."/>
            <person name="Bleykasten C."/>
            <person name="Diffels J."/>
            <person name="Fritsch E."/>
            <person name="Frangeul L."/>
            <person name="Goeffon A."/>
            <person name="Jauniaux N."/>
            <person name="Kachouri-Lafond R."/>
            <person name="Payen C."/>
            <person name="Potier S."/>
            <person name="Pribylova L."/>
            <person name="Ozanne C."/>
            <person name="Richard G.-F."/>
            <person name="Sacerdot C."/>
            <person name="Straub M.-L."/>
            <person name="Talla E."/>
        </authorList>
    </citation>
    <scope>NUCLEOTIDE SEQUENCE [LARGE SCALE GENOMIC DNA]</scope>
    <source>
        <strain>ATCC 56472 / CBS 6340 / NRRL Y-8284</strain>
    </source>
</reference>
<evidence type="ECO:0000255" key="1">
    <source>
        <dbReference type="HAMAP-Rule" id="MF_03123"/>
    </source>
</evidence>
<evidence type="ECO:0000255" key="2">
    <source>
        <dbReference type="PROSITE-ProRule" id="PRU01266"/>
    </source>
</evidence>
<evidence type="ECO:0000256" key="3">
    <source>
        <dbReference type="SAM" id="MobiDB-lite"/>
    </source>
</evidence>